<dbReference type="EMBL" id="CP000857">
    <property type="protein sequence ID" value="ACN47607.1"/>
    <property type="molecule type" value="Genomic_DNA"/>
</dbReference>
<dbReference type="RefSeq" id="WP_001152701.1">
    <property type="nucleotide sequence ID" value="NC_012125.1"/>
</dbReference>
<dbReference type="SMR" id="C0Q0D0"/>
<dbReference type="KEGG" id="sei:SPC_3523"/>
<dbReference type="HOGENOM" id="CLU_180796_4_2_6"/>
<dbReference type="Proteomes" id="UP000001599">
    <property type="component" value="Chromosome"/>
</dbReference>
<dbReference type="Gene3D" id="1.20.5.300">
    <property type="match status" value="1"/>
</dbReference>
<dbReference type="HAMAP" id="MF_00715">
    <property type="entry name" value="SlyX"/>
    <property type="match status" value="1"/>
</dbReference>
<dbReference type="InterPro" id="IPR007236">
    <property type="entry name" value="SlyX"/>
</dbReference>
<dbReference type="NCBIfam" id="NF002750">
    <property type="entry name" value="PRK02793.1"/>
    <property type="match status" value="1"/>
</dbReference>
<dbReference type="PANTHER" id="PTHR36508">
    <property type="entry name" value="PROTEIN SLYX"/>
    <property type="match status" value="1"/>
</dbReference>
<dbReference type="PANTHER" id="PTHR36508:SF1">
    <property type="entry name" value="PROTEIN SLYX"/>
    <property type="match status" value="1"/>
</dbReference>
<dbReference type="Pfam" id="PF04102">
    <property type="entry name" value="SlyX"/>
    <property type="match status" value="1"/>
</dbReference>
<gene>
    <name evidence="1" type="primary">slyX</name>
    <name type="ordered locus">SPC_3523</name>
</gene>
<name>SLYX_SALPC</name>
<organism>
    <name type="scientific">Salmonella paratyphi C (strain RKS4594)</name>
    <dbReference type="NCBI Taxonomy" id="476213"/>
    <lineage>
        <taxon>Bacteria</taxon>
        <taxon>Pseudomonadati</taxon>
        <taxon>Pseudomonadota</taxon>
        <taxon>Gammaproteobacteria</taxon>
        <taxon>Enterobacterales</taxon>
        <taxon>Enterobacteriaceae</taxon>
        <taxon>Salmonella</taxon>
    </lineage>
</organism>
<feature type="chain" id="PRO_1000148008" description="Protein SlyX">
    <location>
        <begin position="1"/>
        <end position="72"/>
    </location>
</feature>
<feature type="region of interest" description="Disordered" evidence="2">
    <location>
        <begin position="53"/>
        <end position="72"/>
    </location>
</feature>
<feature type="compositionally biased region" description="Polar residues" evidence="2">
    <location>
        <begin position="55"/>
        <end position="65"/>
    </location>
</feature>
<protein>
    <recommendedName>
        <fullName evidence="1">Protein SlyX</fullName>
    </recommendedName>
</protein>
<proteinExistence type="inferred from homology"/>
<evidence type="ECO:0000255" key="1">
    <source>
        <dbReference type="HAMAP-Rule" id="MF_00715"/>
    </source>
</evidence>
<evidence type="ECO:0000256" key="2">
    <source>
        <dbReference type="SAM" id="MobiDB-lite"/>
    </source>
</evidence>
<accession>C0Q0D0</accession>
<comment type="similarity">
    <text evidence="1">Belongs to the SlyX family.</text>
</comment>
<sequence length="72" mass="8260">MQDITMEARLAELESRLAFQEITIEELNLTVTAHEMEMAKLRDHLRLLTEKLKASQPSNIASQAEETPPPHY</sequence>
<reference key="1">
    <citation type="journal article" date="2009" name="PLoS ONE">
        <title>Salmonella paratyphi C: genetic divergence from Salmonella choleraesuis and pathogenic convergence with Salmonella typhi.</title>
        <authorList>
            <person name="Liu W.-Q."/>
            <person name="Feng Y."/>
            <person name="Wang Y."/>
            <person name="Zou Q.-H."/>
            <person name="Chen F."/>
            <person name="Guo J.-T."/>
            <person name="Peng Y.-H."/>
            <person name="Jin Y."/>
            <person name="Li Y.-G."/>
            <person name="Hu S.-N."/>
            <person name="Johnston R.N."/>
            <person name="Liu G.-R."/>
            <person name="Liu S.-L."/>
        </authorList>
    </citation>
    <scope>NUCLEOTIDE SEQUENCE [LARGE SCALE GENOMIC DNA]</scope>
    <source>
        <strain>RKS4594</strain>
    </source>
</reference>